<protein>
    <recommendedName>
        <fullName evidence="1">Large ribosomal subunit protein uL4</fullName>
    </recommendedName>
    <alternativeName>
        <fullName evidence="3">50S ribosomal protein L4</fullName>
    </alternativeName>
</protein>
<name>RL4_METFK</name>
<proteinExistence type="inferred from homology"/>
<dbReference type="EMBL" id="CP000284">
    <property type="protein sequence ID" value="ABE48551.1"/>
    <property type="molecule type" value="Genomic_DNA"/>
</dbReference>
<dbReference type="RefSeq" id="WP_011478648.1">
    <property type="nucleotide sequence ID" value="NC_007947.1"/>
</dbReference>
<dbReference type="SMR" id="Q1H4N6"/>
<dbReference type="STRING" id="265072.Mfla_0280"/>
<dbReference type="KEGG" id="mfa:Mfla_0280"/>
<dbReference type="eggNOG" id="COG0088">
    <property type="taxonomic scope" value="Bacteria"/>
</dbReference>
<dbReference type="HOGENOM" id="CLU_041575_5_2_4"/>
<dbReference type="OrthoDB" id="9803201at2"/>
<dbReference type="Proteomes" id="UP000002440">
    <property type="component" value="Chromosome"/>
</dbReference>
<dbReference type="GO" id="GO:1990904">
    <property type="term" value="C:ribonucleoprotein complex"/>
    <property type="evidence" value="ECO:0007669"/>
    <property type="project" value="UniProtKB-KW"/>
</dbReference>
<dbReference type="GO" id="GO:0005840">
    <property type="term" value="C:ribosome"/>
    <property type="evidence" value="ECO:0007669"/>
    <property type="project" value="UniProtKB-KW"/>
</dbReference>
<dbReference type="GO" id="GO:0019843">
    <property type="term" value="F:rRNA binding"/>
    <property type="evidence" value="ECO:0007669"/>
    <property type="project" value="UniProtKB-UniRule"/>
</dbReference>
<dbReference type="GO" id="GO:0003735">
    <property type="term" value="F:structural constituent of ribosome"/>
    <property type="evidence" value="ECO:0007669"/>
    <property type="project" value="InterPro"/>
</dbReference>
<dbReference type="GO" id="GO:0006412">
    <property type="term" value="P:translation"/>
    <property type="evidence" value="ECO:0007669"/>
    <property type="project" value="UniProtKB-UniRule"/>
</dbReference>
<dbReference type="Gene3D" id="3.40.1370.10">
    <property type="match status" value="1"/>
</dbReference>
<dbReference type="HAMAP" id="MF_01328_B">
    <property type="entry name" value="Ribosomal_uL4_B"/>
    <property type="match status" value="1"/>
</dbReference>
<dbReference type="InterPro" id="IPR002136">
    <property type="entry name" value="Ribosomal_uL4"/>
</dbReference>
<dbReference type="InterPro" id="IPR013005">
    <property type="entry name" value="Ribosomal_uL4-like"/>
</dbReference>
<dbReference type="InterPro" id="IPR023574">
    <property type="entry name" value="Ribosomal_uL4_dom_sf"/>
</dbReference>
<dbReference type="NCBIfam" id="TIGR03953">
    <property type="entry name" value="rplD_bact"/>
    <property type="match status" value="1"/>
</dbReference>
<dbReference type="PANTHER" id="PTHR10746">
    <property type="entry name" value="50S RIBOSOMAL PROTEIN L4"/>
    <property type="match status" value="1"/>
</dbReference>
<dbReference type="PANTHER" id="PTHR10746:SF6">
    <property type="entry name" value="LARGE RIBOSOMAL SUBUNIT PROTEIN UL4M"/>
    <property type="match status" value="1"/>
</dbReference>
<dbReference type="Pfam" id="PF00573">
    <property type="entry name" value="Ribosomal_L4"/>
    <property type="match status" value="1"/>
</dbReference>
<dbReference type="SUPFAM" id="SSF52166">
    <property type="entry name" value="Ribosomal protein L4"/>
    <property type="match status" value="1"/>
</dbReference>
<reference key="1">
    <citation type="submission" date="2006-03" db="EMBL/GenBank/DDBJ databases">
        <title>Complete sequence of Methylobacillus flagellatus KT.</title>
        <authorList>
            <consortium name="US DOE Joint Genome Institute"/>
            <person name="Copeland A."/>
            <person name="Lucas S."/>
            <person name="Lapidus A."/>
            <person name="Barry K."/>
            <person name="Detter J.C."/>
            <person name="Glavina del Rio T."/>
            <person name="Hammon N."/>
            <person name="Israni S."/>
            <person name="Dalin E."/>
            <person name="Tice H."/>
            <person name="Pitluck S."/>
            <person name="Brettin T."/>
            <person name="Bruce D."/>
            <person name="Han C."/>
            <person name="Tapia R."/>
            <person name="Saunders E."/>
            <person name="Gilna P."/>
            <person name="Schmutz J."/>
            <person name="Larimer F."/>
            <person name="Land M."/>
            <person name="Kyrpides N."/>
            <person name="Anderson I."/>
            <person name="Richardson P."/>
        </authorList>
    </citation>
    <scope>NUCLEOTIDE SEQUENCE [LARGE SCALE GENOMIC DNA]</scope>
    <source>
        <strain>ATCC 51484 / DSM 6875 / VKM B-1610 / KT</strain>
    </source>
</reference>
<accession>Q1H4N6</accession>
<feature type="chain" id="PRO_1000052439" description="Large ribosomal subunit protein uL4">
    <location>
        <begin position="1"/>
        <end position="208"/>
    </location>
</feature>
<feature type="region of interest" description="Disordered" evidence="2">
    <location>
        <begin position="54"/>
        <end position="78"/>
    </location>
</feature>
<evidence type="ECO:0000255" key="1">
    <source>
        <dbReference type="HAMAP-Rule" id="MF_01328"/>
    </source>
</evidence>
<evidence type="ECO:0000256" key="2">
    <source>
        <dbReference type="SAM" id="MobiDB-lite"/>
    </source>
</evidence>
<evidence type="ECO:0000305" key="3"/>
<keyword id="KW-1185">Reference proteome</keyword>
<keyword id="KW-0687">Ribonucleoprotein</keyword>
<keyword id="KW-0689">Ribosomal protein</keyword>
<keyword id="KW-0694">RNA-binding</keyword>
<keyword id="KW-0699">rRNA-binding</keyword>
<sequence>MEIKLIDKNGRPAKAGLAVSEATFGREFNEALVHQVVVAYQANARTATRAQLTRAEVSHTTKKPWNQKGTGRARAGMSSSTIWRGGGRAFPNTPDENFSHKINRKAYRAGVRSILSELVRQDRLSAVEEFAVDTPKTKQLVEKIKGLGYNEGLLVLVDKFDENLYLSARNLPHVLVLEAQYVDPVSLVRFPQVLATAGAVKKLEEMLA</sequence>
<comment type="function">
    <text evidence="1">One of the primary rRNA binding proteins, this protein initially binds near the 5'-end of the 23S rRNA. It is important during the early stages of 50S assembly. It makes multiple contacts with different domains of the 23S rRNA in the assembled 50S subunit and ribosome.</text>
</comment>
<comment type="function">
    <text evidence="1">Forms part of the polypeptide exit tunnel.</text>
</comment>
<comment type="subunit">
    <text evidence="1">Part of the 50S ribosomal subunit.</text>
</comment>
<comment type="similarity">
    <text evidence="1">Belongs to the universal ribosomal protein uL4 family.</text>
</comment>
<gene>
    <name evidence="1" type="primary">rplD</name>
    <name type="ordered locus">Mfla_0280</name>
</gene>
<organism>
    <name type="scientific">Methylobacillus flagellatus (strain ATCC 51484 / DSM 6875 / VKM B-1610 / KT)</name>
    <dbReference type="NCBI Taxonomy" id="265072"/>
    <lineage>
        <taxon>Bacteria</taxon>
        <taxon>Pseudomonadati</taxon>
        <taxon>Pseudomonadota</taxon>
        <taxon>Betaproteobacteria</taxon>
        <taxon>Nitrosomonadales</taxon>
        <taxon>Methylophilaceae</taxon>
        <taxon>Methylobacillus</taxon>
    </lineage>
</organism>